<accession>Q0K9I0</accession>
<feature type="chain" id="PRO_1000066832" description="Alkanesulfonate monooxygenase">
    <location>
        <begin position="1"/>
        <end position="387"/>
    </location>
</feature>
<protein>
    <recommendedName>
        <fullName evidence="1">Alkanesulfonate monooxygenase</fullName>
        <ecNumber evidence="1">1.14.14.5</ecNumber>
    </recommendedName>
    <alternativeName>
        <fullName evidence="1">FMNH2-dependent aliphatic sulfonate monooxygenase</fullName>
    </alternativeName>
</protein>
<keyword id="KW-0285">Flavoprotein</keyword>
<keyword id="KW-0288">FMN</keyword>
<keyword id="KW-0503">Monooxygenase</keyword>
<keyword id="KW-0560">Oxidoreductase</keyword>
<keyword id="KW-1185">Reference proteome</keyword>
<organism>
    <name type="scientific">Cupriavidus necator (strain ATCC 17699 / DSM 428 / KCTC 22496 / NCIMB 10442 / H16 / Stanier 337)</name>
    <name type="common">Ralstonia eutropha</name>
    <dbReference type="NCBI Taxonomy" id="381666"/>
    <lineage>
        <taxon>Bacteria</taxon>
        <taxon>Pseudomonadati</taxon>
        <taxon>Pseudomonadota</taxon>
        <taxon>Betaproteobacteria</taxon>
        <taxon>Burkholderiales</taxon>
        <taxon>Burkholderiaceae</taxon>
        <taxon>Cupriavidus</taxon>
    </lineage>
</organism>
<dbReference type="EC" id="1.14.14.5" evidence="1"/>
<dbReference type="EMBL" id="AM260479">
    <property type="protein sequence ID" value="CAJ93341.1"/>
    <property type="molecule type" value="Genomic_DNA"/>
</dbReference>
<dbReference type="RefSeq" id="WP_011615572.1">
    <property type="nucleotide sequence ID" value="NC_008313.1"/>
</dbReference>
<dbReference type="SMR" id="Q0K9I0"/>
<dbReference type="STRING" id="381666.H16_A2244"/>
<dbReference type="GeneID" id="34309433"/>
<dbReference type="KEGG" id="reh:H16_A2244"/>
<dbReference type="eggNOG" id="COG2141">
    <property type="taxonomic scope" value="Bacteria"/>
</dbReference>
<dbReference type="HOGENOM" id="CLU_027853_1_0_4"/>
<dbReference type="OrthoDB" id="9814695at2"/>
<dbReference type="Proteomes" id="UP000008210">
    <property type="component" value="Chromosome 1"/>
</dbReference>
<dbReference type="GO" id="GO:0008726">
    <property type="term" value="F:alkanesulfonate monooxygenase activity"/>
    <property type="evidence" value="ECO:0007669"/>
    <property type="project" value="UniProtKB-UniRule"/>
</dbReference>
<dbReference type="GO" id="GO:0046306">
    <property type="term" value="P:alkanesulfonate catabolic process"/>
    <property type="evidence" value="ECO:0007669"/>
    <property type="project" value="TreeGrafter"/>
</dbReference>
<dbReference type="CDD" id="cd01094">
    <property type="entry name" value="Alkanesulfonate_monoxygenase"/>
    <property type="match status" value="1"/>
</dbReference>
<dbReference type="Gene3D" id="3.20.20.30">
    <property type="entry name" value="Luciferase-like domain"/>
    <property type="match status" value="1"/>
</dbReference>
<dbReference type="HAMAP" id="MF_01229">
    <property type="entry name" value="Alkanesulf_monooxygen"/>
    <property type="match status" value="1"/>
</dbReference>
<dbReference type="InterPro" id="IPR019911">
    <property type="entry name" value="Alkanesulphonate_mOase_FMN-dep"/>
</dbReference>
<dbReference type="InterPro" id="IPR011251">
    <property type="entry name" value="Luciferase-like_dom"/>
</dbReference>
<dbReference type="InterPro" id="IPR036661">
    <property type="entry name" value="Luciferase-like_sf"/>
</dbReference>
<dbReference type="InterPro" id="IPR050172">
    <property type="entry name" value="SsuD_RutA_monooxygenase"/>
</dbReference>
<dbReference type="NCBIfam" id="TIGR03565">
    <property type="entry name" value="alk_sulf_monoox"/>
    <property type="match status" value="1"/>
</dbReference>
<dbReference type="NCBIfam" id="NF001939">
    <property type="entry name" value="PRK00719.1"/>
    <property type="match status" value="1"/>
</dbReference>
<dbReference type="PANTHER" id="PTHR42847">
    <property type="entry name" value="ALKANESULFONATE MONOOXYGENASE"/>
    <property type="match status" value="1"/>
</dbReference>
<dbReference type="PANTHER" id="PTHR42847:SF4">
    <property type="entry name" value="ALKANESULFONATE MONOOXYGENASE-RELATED"/>
    <property type="match status" value="1"/>
</dbReference>
<dbReference type="Pfam" id="PF00296">
    <property type="entry name" value="Bac_luciferase"/>
    <property type="match status" value="1"/>
</dbReference>
<dbReference type="SUPFAM" id="SSF51679">
    <property type="entry name" value="Bacterial luciferase-like"/>
    <property type="match status" value="1"/>
</dbReference>
<gene>
    <name evidence="1" type="primary">ssuD</name>
    <name type="ordered locus">H16_A2244</name>
</gene>
<reference key="1">
    <citation type="journal article" date="2006" name="Nat. Biotechnol.">
        <title>Genome sequence of the bioplastic-producing 'Knallgas' bacterium Ralstonia eutropha H16.</title>
        <authorList>
            <person name="Pohlmann A."/>
            <person name="Fricke W.F."/>
            <person name="Reinecke F."/>
            <person name="Kusian B."/>
            <person name="Liesegang H."/>
            <person name="Cramm R."/>
            <person name="Eitinger T."/>
            <person name="Ewering C."/>
            <person name="Poetter M."/>
            <person name="Schwartz E."/>
            <person name="Strittmatter A."/>
            <person name="Voss I."/>
            <person name="Gottschalk G."/>
            <person name="Steinbuechel A."/>
            <person name="Friedrich B."/>
            <person name="Bowien B."/>
        </authorList>
    </citation>
    <scope>NUCLEOTIDE SEQUENCE [LARGE SCALE GENOMIC DNA]</scope>
    <source>
        <strain>ATCC 17699 / DSM 428 / KCTC 22496 / NCIMB 10442 / H16 / Stanier 337</strain>
    </source>
</reference>
<sequence>MQVFWFIPTHGDSRYLGTSEGAREVSFDYLKQVAVAADTLGYEGVLIPTGRSCEDPWVAASALAAVTQRLKFLVAVRPGLMAPTLAARMAATFDRISNGRLLINLVTGGDTAELEGDGLFLDHTARYEASAEFLRIWRQVLAASHDGDKVDYEGKHLSVKGATVLYPPLQQPHPPVYFGGSSAPAHALAGEQVDTYLTWGEPPADVAQKLDDVRRQAARHGRTVKFGIRLHVIVRETEAAAWAAADDLISRLDDETVARAQAVFAKMDSEGQRRMAALHAGGARRTREALEISPNLWAGVGLVRGGAGTALVGDPHTVAERMREYAELGIDTFVLSGYPHLEEAYRFAELVFPLLPRSVRDKLPGKVLSGPFGEVMATGIVPRAAQS</sequence>
<comment type="function">
    <text evidence="1">Catalyzes the desulfonation of aliphatic sulfonates.</text>
</comment>
<comment type="catalytic activity">
    <reaction evidence="1">
        <text>an alkanesulfonate + FMNH2 + O2 = an aldehyde + FMN + sulfite + H2O + 2 H(+)</text>
        <dbReference type="Rhea" id="RHEA:23064"/>
        <dbReference type="ChEBI" id="CHEBI:15377"/>
        <dbReference type="ChEBI" id="CHEBI:15378"/>
        <dbReference type="ChEBI" id="CHEBI:15379"/>
        <dbReference type="ChEBI" id="CHEBI:17359"/>
        <dbReference type="ChEBI" id="CHEBI:17478"/>
        <dbReference type="ChEBI" id="CHEBI:57618"/>
        <dbReference type="ChEBI" id="CHEBI:58210"/>
        <dbReference type="ChEBI" id="CHEBI:134249"/>
        <dbReference type="EC" id="1.14.14.5"/>
    </reaction>
</comment>
<comment type="similarity">
    <text evidence="1">Belongs to the SsuD family.</text>
</comment>
<evidence type="ECO:0000255" key="1">
    <source>
        <dbReference type="HAMAP-Rule" id="MF_01229"/>
    </source>
</evidence>
<name>SSUD_CUPNH</name>
<proteinExistence type="inferred from homology"/>